<comment type="catalytic activity">
    <reaction>
        <text>O-phospho-L-seryl-[protein] + H2O = L-seryl-[protein] + phosphate</text>
        <dbReference type="Rhea" id="RHEA:20629"/>
        <dbReference type="Rhea" id="RHEA-COMP:9863"/>
        <dbReference type="Rhea" id="RHEA-COMP:11604"/>
        <dbReference type="ChEBI" id="CHEBI:15377"/>
        <dbReference type="ChEBI" id="CHEBI:29999"/>
        <dbReference type="ChEBI" id="CHEBI:43474"/>
        <dbReference type="ChEBI" id="CHEBI:83421"/>
        <dbReference type="EC" id="3.1.3.16"/>
    </reaction>
</comment>
<comment type="catalytic activity">
    <reaction>
        <text>O-phospho-L-threonyl-[protein] + H2O = L-threonyl-[protein] + phosphate</text>
        <dbReference type="Rhea" id="RHEA:47004"/>
        <dbReference type="Rhea" id="RHEA-COMP:11060"/>
        <dbReference type="Rhea" id="RHEA-COMP:11605"/>
        <dbReference type="ChEBI" id="CHEBI:15377"/>
        <dbReference type="ChEBI" id="CHEBI:30013"/>
        <dbReference type="ChEBI" id="CHEBI:43474"/>
        <dbReference type="ChEBI" id="CHEBI:61977"/>
        <dbReference type="EC" id="3.1.3.16"/>
    </reaction>
</comment>
<comment type="subcellular location">
    <subcellularLocation>
        <location evidence="1">Nucleus</location>
    </subcellularLocation>
    <subcellularLocation>
        <location evidence="1">Cytoplasm</location>
    </subcellularLocation>
</comment>
<comment type="similarity">
    <text evidence="4">Belongs to the PP2C family.</text>
</comment>
<proteinExistence type="evidence at transcript level"/>
<accession>Q05AL2</accession>
<sequence>MMTRVRSAVSSIIGGIMASGTGAHDSHPDLPLRFPYSRPDFLALSPDEVECSADHISRPILILKEMKLPWATGYAEVINAGKSALNEDQACCEVVELRKRPADPSSVSYTPSRRRSSLPSGDVLDTIHNPEVKELDFHYWALFDGHGGSGAAVFAAKFLHLHIEEQLQEVLEILQDPGLQPPTCLGEESPNPQLHASASGSQRGLSRAASLRGAAGAPGSPNTMAPRFFMEKKIKQESLVVGAIENAFKEMDAHIARERCAYSISGGCTALAVMFLLGKLYVANAGDSRALIVRAGELITMSSSFTPESERQRLQFLAHLQPSLLGSDFTHLEFPRRVTKREIGKRMLYRDFTMNGWAYKTVQEEDLKFPLIYGEGKKARVLATIGITRGLGDHDLKVHDSDIAIKPFLSCSPEVQVYNLCQFEHGADDVLILATDGLWDVLSNQEVADAVSGFLGNCDPDDQHRYTMAAQDLVMKARGILKDRGWRIAGDRLGSGDDISVFIIPLMYGTQQPQPS</sequence>
<reference key="1">
    <citation type="submission" date="2006-09" db="EMBL/GenBank/DDBJ databases">
        <authorList>
            <consortium name="NIH - Zebrafish Gene Collection (ZGC) project"/>
        </authorList>
    </citation>
    <scope>NUCLEOTIDE SEQUENCE [LARGE SCALE MRNA]</scope>
    <source>
        <tissue>Ovary</tissue>
    </source>
</reference>
<organism>
    <name type="scientific">Danio rerio</name>
    <name type="common">Zebrafish</name>
    <name type="synonym">Brachydanio rerio</name>
    <dbReference type="NCBI Taxonomy" id="7955"/>
    <lineage>
        <taxon>Eukaryota</taxon>
        <taxon>Metazoa</taxon>
        <taxon>Chordata</taxon>
        <taxon>Craniata</taxon>
        <taxon>Vertebrata</taxon>
        <taxon>Euteleostomi</taxon>
        <taxon>Actinopterygii</taxon>
        <taxon>Neopterygii</taxon>
        <taxon>Teleostei</taxon>
        <taxon>Ostariophysi</taxon>
        <taxon>Cypriniformes</taxon>
        <taxon>Danionidae</taxon>
        <taxon>Danioninae</taxon>
        <taxon>Danio</taxon>
    </lineage>
</organism>
<name>PPM1H_DANRE</name>
<gene>
    <name type="primary">ppm1h</name>
    <name type="ORF">zgc:153678</name>
</gene>
<keyword id="KW-0963">Cytoplasm</keyword>
<keyword id="KW-0378">Hydrolase</keyword>
<keyword id="KW-0539">Nucleus</keyword>
<keyword id="KW-0904">Protein phosphatase</keyword>
<keyword id="KW-1185">Reference proteome</keyword>
<evidence type="ECO:0000250" key="1">
    <source>
        <dbReference type="UniProtKB" id="Q9ULR3"/>
    </source>
</evidence>
<evidence type="ECO:0000255" key="2">
    <source>
        <dbReference type="PROSITE-ProRule" id="PRU01082"/>
    </source>
</evidence>
<evidence type="ECO:0000256" key="3">
    <source>
        <dbReference type="SAM" id="MobiDB-lite"/>
    </source>
</evidence>
<evidence type="ECO:0000305" key="4"/>
<protein>
    <recommendedName>
        <fullName>Protein phosphatase 1H</fullName>
        <ecNumber>3.1.3.16</ecNumber>
    </recommendedName>
</protein>
<feature type="chain" id="PRO_0000286606" description="Protein phosphatase 1H">
    <location>
        <begin position="1"/>
        <end position="516"/>
    </location>
</feature>
<feature type="domain" description="PPM-type phosphatase" evidence="2">
    <location>
        <begin position="106"/>
        <end position="506"/>
    </location>
</feature>
<feature type="region of interest" description="Disordered" evidence="3">
    <location>
        <begin position="102"/>
        <end position="122"/>
    </location>
</feature>
<feature type="region of interest" description="Disordered" evidence="3">
    <location>
        <begin position="181"/>
        <end position="202"/>
    </location>
</feature>
<feature type="compositionally biased region" description="Polar residues" evidence="3">
    <location>
        <begin position="190"/>
        <end position="202"/>
    </location>
</feature>
<dbReference type="EC" id="3.1.3.16"/>
<dbReference type="EMBL" id="BC124421">
    <property type="protein sequence ID" value="AAI24422.1"/>
    <property type="molecule type" value="mRNA"/>
</dbReference>
<dbReference type="RefSeq" id="NP_001070923.1">
    <property type="nucleotide sequence ID" value="NM_001077455.1"/>
</dbReference>
<dbReference type="SMR" id="Q05AL2"/>
<dbReference type="FunCoup" id="Q05AL2">
    <property type="interactions" value="1072"/>
</dbReference>
<dbReference type="STRING" id="7955.ENSDARP00000087709"/>
<dbReference type="PaxDb" id="7955-ENSDARP00000087709"/>
<dbReference type="GeneID" id="768291"/>
<dbReference type="KEGG" id="dre:768291"/>
<dbReference type="AGR" id="ZFIN:ZDB-GENE-061027-190"/>
<dbReference type="CTD" id="57460"/>
<dbReference type="ZFIN" id="ZDB-GENE-061027-190">
    <property type="gene designation" value="ppm1h"/>
</dbReference>
<dbReference type="eggNOG" id="KOG1323">
    <property type="taxonomic scope" value="Eukaryota"/>
</dbReference>
<dbReference type="InParanoid" id="Q05AL2"/>
<dbReference type="OrthoDB" id="10264738at2759"/>
<dbReference type="PhylomeDB" id="Q05AL2"/>
<dbReference type="PRO" id="PR:Q05AL2"/>
<dbReference type="Proteomes" id="UP000000437">
    <property type="component" value="Chromosome 25"/>
</dbReference>
<dbReference type="GO" id="GO:0005737">
    <property type="term" value="C:cytoplasm"/>
    <property type="evidence" value="ECO:0000250"/>
    <property type="project" value="UniProtKB"/>
</dbReference>
<dbReference type="GO" id="GO:0005739">
    <property type="term" value="C:mitochondrion"/>
    <property type="evidence" value="ECO:0000318"/>
    <property type="project" value="GO_Central"/>
</dbReference>
<dbReference type="GO" id="GO:0005634">
    <property type="term" value="C:nucleus"/>
    <property type="evidence" value="ECO:0000250"/>
    <property type="project" value="UniProtKB"/>
</dbReference>
<dbReference type="GO" id="GO:0004741">
    <property type="term" value="F:[pyruvate dehydrogenase (acetyl-transferring)]-phosphatase activity"/>
    <property type="evidence" value="ECO:0000318"/>
    <property type="project" value="GO_Central"/>
</dbReference>
<dbReference type="GO" id="GO:0004721">
    <property type="term" value="F:phosphoprotein phosphatase activity"/>
    <property type="evidence" value="ECO:0000250"/>
    <property type="project" value="UniProtKB"/>
</dbReference>
<dbReference type="GO" id="GO:0007165">
    <property type="term" value="P:signal transduction"/>
    <property type="evidence" value="ECO:0000318"/>
    <property type="project" value="GO_Central"/>
</dbReference>
<dbReference type="CDD" id="cd00143">
    <property type="entry name" value="PP2Cc"/>
    <property type="match status" value="1"/>
</dbReference>
<dbReference type="Gene3D" id="3.60.40.10">
    <property type="entry name" value="PPM-type phosphatase domain"/>
    <property type="match status" value="1"/>
</dbReference>
<dbReference type="InterPro" id="IPR015655">
    <property type="entry name" value="PP2C"/>
</dbReference>
<dbReference type="InterPro" id="IPR036457">
    <property type="entry name" value="PPM-type-like_dom_sf"/>
</dbReference>
<dbReference type="InterPro" id="IPR001932">
    <property type="entry name" value="PPM-type_phosphatase-like_dom"/>
</dbReference>
<dbReference type="PANTHER" id="PTHR13832:SF838">
    <property type="entry name" value="PROTEIN PHOSPHATASE 1H"/>
    <property type="match status" value="1"/>
</dbReference>
<dbReference type="PANTHER" id="PTHR13832">
    <property type="entry name" value="PROTEIN PHOSPHATASE 2C"/>
    <property type="match status" value="1"/>
</dbReference>
<dbReference type="Pfam" id="PF00481">
    <property type="entry name" value="PP2C"/>
    <property type="match status" value="2"/>
</dbReference>
<dbReference type="SMART" id="SM00332">
    <property type="entry name" value="PP2Cc"/>
    <property type="match status" value="1"/>
</dbReference>
<dbReference type="SUPFAM" id="SSF81606">
    <property type="entry name" value="PP2C-like"/>
    <property type="match status" value="1"/>
</dbReference>
<dbReference type="PROSITE" id="PS51746">
    <property type="entry name" value="PPM_2"/>
    <property type="match status" value="1"/>
</dbReference>